<gene>
    <name evidence="1" type="primary">tpx</name>
    <name type="synonym">tagD</name>
    <name type="ordered locus">VC_0824</name>
</gene>
<evidence type="ECO:0000255" key="1">
    <source>
        <dbReference type="HAMAP-Rule" id="MF_00269"/>
    </source>
</evidence>
<evidence type="ECO:0000305" key="2"/>
<feature type="chain" id="PRO_0000187917" description="Thiol peroxidase">
    <location>
        <begin position="1"/>
        <end position="164"/>
    </location>
</feature>
<feature type="domain" description="Thioredoxin" evidence="1">
    <location>
        <begin position="17"/>
        <end position="164"/>
    </location>
</feature>
<feature type="active site" description="Cysteine sulfenic acid (-SOH) intermediate" evidence="1">
    <location>
        <position position="59"/>
    </location>
</feature>
<feature type="disulfide bond" description="Redox-active" evidence="1">
    <location>
        <begin position="59"/>
        <end position="93"/>
    </location>
</feature>
<accession>P0C6P9</accession>
<accession>P39167</accession>
<accession>Q9KTR6</accession>
<comment type="function">
    <text evidence="1">Thiol-specific peroxidase that catalyzes the reduction of hydrogen peroxide and organic hydroperoxides to water and alcohols, respectively. Plays a role in cell protection against oxidative stress by detoxifying peroxides.</text>
</comment>
<comment type="catalytic activity">
    <reaction evidence="1">
        <text>a hydroperoxide + [thioredoxin]-dithiol = an alcohol + [thioredoxin]-disulfide + H2O</text>
        <dbReference type="Rhea" id="RHEA:62620"/>
        <dbReference type="Rhea" id="RHEA-COMP:10698"/>
        <dbReference type="Rhea" id="RHEA-COMP:10700"/>
        <dbReference type="ChEBI" id="CHEBI:15377"/>
        <dbReference type="ChEBI" id="CHEBI:29950"/>
        <dbReference type="ChEBI" id="CHEBI:30879"/>
        <dbReference type="ChEBI" id="CHEBI:35924"/>
        <dbReference type="ChEBI" id="CHEBI:50058"/>
        <dbReference type="EC" id="1.11.1.24"/>
    </reaction>
</comment>
<comment type="subunit">
    <text evidence="1">Homodimer.</text>
</comment>
<comment type="PTM">
    <text evidence="2">Contains two disulfide bonds.</text>
</comment>
<comment type="miscellaneous">
    <text evidence="1">The active site is a conserved redox-active cysteine residue, the peroxidatic cysteine (C(P)), which makes the nucleophilic attack on the peroxide substrate. The peroxide oxidizes the C(P)-SH to cysteine sulfenic acid (C(P)-SOH), which then reacts with another cysteine residue, the resolving cysteine (C(R)), to form a disulfide bridge. The disulfide is subsequently reduced by an appropriate electron donor to complete the catalytic cycle. In this atypical 2-Cys peroxiredoxin, C(R) is present in the same subunit to form an intramolecular disulfide. The disulfide is subsequently reduced by thioredoxin.</text>
</comment>
<comment type="similarity">
    <text evidence="1">Belongs to the peroxiredoxin family. Tpx subfamily.</text>
</comment>
<dbReference type="EC" id="1.11.1.24" evidence="1"/>
<dbReference type="EMBL" id="AE003852">
    <property type="protein sequence ID" value="AAF93987.1"/>
    <property type="molecule type" value="Genomic_DNA"/>
</dbReference>
<dbReference type="PIR" id="C82274">
    <property type="entry name" value="C82274"/>
</dbReference>
<dbReference type="RefSeq" id="NP_230472.1">
    <property type="nucleotide sequence ID" value="NC_002505.1"/>
</dbReference>
<dbReference type="RefSeq" id="WP_000218964.1">
    <property type="nucleotide sequence ID" value="NZ_LT906614.1"/>
</dbReference>
<dbReference type="SMR" id="P0C6P9"/>
<dbReference type="STRING" id="243277.VC_0824"/>
<dbReference type="DNASU" id="2614491"/>
<dbReference type="EnsemblBacteria" id="AAF93987">
    <property type="protein sequence ID" value="AAF93987"/>
    <property type="gene ID" value="VC_0824"/>
</dbReference>
<dbReference type="KEGG" id="vch:VC_0824"/>
<dbReference type="PATRIC" id="fig|243277.26.peg.785"/>
<dbReference type="eggNOG" id="COG2077">
    <property type="taxonomic scope" value="Bacteria"/>
</dbReference>
<dbReference type="HOGENOM" id="CLU_042529_12_2_6"/>
<dbReference type="Proteomes" id="UP000000584">
    <property type="component" value="Chromosome 1"/>
</dbReference>
<dbReference type="GO" id="GO:0008379">
    <property type="term" value="F:thioredoxin peroxidase activity"/>
    <property type="evidence" value="ECO:0007669"/>
    <property type="project" value="UniProtKB-UniRule"/>
</dbReference>
<dbReference type="CDD" id="cd03014">
    <property type="entry name" value="PRX_Atyp2cys"/>
    <property type="match status" value="1"/>
</dbReference>
<dbReference type="Gene3D" id="3.40.30.10">
    <property type="entry name" value="Glutaredoxin"/>
    <property type="match status" value="1"/>
</dbReference>
<dbReference type="HAMAP" id="MF_00269">
    <property type="entry name" value="Tpx"/>
    <property type="match status" value="1"/>
</dbReference>
<dbReference type="InterPro" id="IPR013740">
    <property type="entry name" value="Redoxin"/>
</dbReference>
<dbReference type="InterPro" id="IPR036249">
    <property type="entry name" value="Thioredoxin-like_sf"/>
</dbReference>
<dbReference type="InterPro" id="IPR013766">
    <property type="entry name" value="Thioredoxin_domain"/>
</dbReference>
<dbReference type="InterPro" id="IPR002065">
    <property type="entry name" value="TPX"/>
</dbReference>
<dbReference type="InterPro" id="IPR018219">
    <property type="entry name" value="Tpx_CS"/>
</dbReference>
<dbReference type="InterPro" id="IPR050455">
    <property type="entry name" value="Tpx_Peroxidase_subfamily"/>
</dbReference>
<dbReference type="NCBIfam" id="NF001808">
    <property type="entry name" value="PRK00522.1"/>
    <property type="match status" value="1"/>
</dbReference>
<dbReference type="PANTHER" id="PTHR43110">
    <property type="entry name" value="THIOL PEROXIDASE"/>
    <property type="match status" value="1"/>
</dbReference>
<dbReference type="PANTHER" id="PTHR43110:SF1">
    <property type="entry name" value="THIOL PEROXIDASE"/>
    <property type="match status" value="1"/>
</dbReference>
<dbReference type="Pfam" id="PF08534">
    <property type="entry name" value="Redoxin"/>
    <property type="match status" value="1"/>
</dbReference>
<dbReference type="SUPFAM" id="SSF52833">
    <property type="entry name" value="Thioredoxin-like"/>
    <property type="match status" value="1"/>
</dbReference>
<dbReference type="PROSITE" id="PS51352">
    <property type="entry name" value="THIOREDOXIN_2"/>
    <property type="match status" value="1"/>
</dbReference>
<dbReference type="PROSITE" id="PS01265">
    <property type="entry name" value="TPX"/>
    <property type="match status" value="1"/>
</dbReference>
<protein>
    <recommendedName>
        <fullName evidence="1">Thiol peroxidase</fullName>
        <shortName evidence="1">Tpx</shortName>
        <ecNumber evidence="1">1.11.1.24</ecNumber>
    </recommendedName>
    <alternativeName>
        <fullName evidence="1">Peroxiredoxin tpx</fullName>
        <shortName evidence="1">Prx</shortName>
    </alternativeName>
    <alternativeName>
        <fullName evidence="1">Thioredoxin peroxidase</fullName>
    </alternativeName>
    <alternativeName>
        <fullName evidence="1">Thioredoxin-dependent peroxiredoxin</fullName>
    </alternativeName>
</protein>
<sequence length="164" mass="17924">MTVTFQNNPVSISGSFPKVGDRLPSFTLCGADLNDLSNEDFKGKKIVMSIFPSIDTPVCSKSVKVLQNALMTRNDTVLLCVSADLPFAMSRFCTEHAVANVTNASFFREPAFTERFGVNLNEGALRGLAARAVIVADEFGVITHSELVNEITNEPDYDRILMSL</sequence>
<proteinExistence type="inferred from homology"/>
<organism>
    <name type="scientific">Vibrio cholerae serotype O1 (strain ATCC 39315 / El Tor Inaba N16961)</name>
    <dbReference type="NCBI Taxonomy" id="243277"/>
    <lineage>
        <taxon>Bacteria</taxon>
        <taxon>Pseudomonadati</taxon>
        <taxon>Pseudomonadota</taxon>
        <taxon>Gammaproteobacteria</taxon>
        <taxon>Vibrionales</taxon>
        <taxon>Vibrionaceae</taxon>
        <taxon>Vibrio</taxon>
    </lineage>
</organism>
<keyword id="KW-0049">Antioxidant</keyword>
<keyword id="KW-1015">Disulfide bond</keyword>
<keyword id="KW-0560">Oxidoreductase</keyword>
<keyword id="KW-0575">Peroxidase</keyword>
<keyword id="KW-0676">Redox-active center</keyword>
<keyword id="KW-1185">Reference proteome</keyword>
<name>TPX_VIBCH</name>
<reference key="1">
    <citation type="journal article" date="2000" name="Nature">
        <title>DNA sequence of both chromosomes of the cholera pathogen Vibrio cholerae.</title>
        <authorList>
            <person name="Heidelberg J.F."/>
            <person name="Eisen J.A."/>
            <person name="Nelson W.C."/>
            <person name="Clayton R.A."/>
            <person name="Gwinn M.L."/>
            <person name="Dodson R.J."/>
            <person name="Haft D.H."/>
            <person name="Hickey E.K."/>
            <person name="Peterson J.D."/>
            <person name="Umayam L.A."/>
            <person name="Gill S.R."/>
            <person name="Nelson K.E."/>
            <person name="Read T.D."/>
            <person name="Tettelin H."/>
            <person name="Richardson D.L."/>
            <person name="Ermolaeva M.D."/>
            <person name="Vamathevan J.J."/>
            <person name="Bass S."/>
            <person name="Qin H."/>
            <person name="Dragoi I."/>
            <person name="Sellers P."/>
            <person name="McDonald L.A."/>
            <person name="Utterback T.R."/>
            <person name="Fleischmann R.D."/>
            <person name="Nierman W.C."/>
            <person name="White O."/>
            <person name="Salzberg S.L."/>
            <person name="Smith H.O."/>
            <person name="Colwell R.R."/>
            <person name="Mekalanos J.J."/>
            <person name="Venter J.C."/>
            <person name="Fraser C.M."/>
        </authorList>
    </citation>
    <scope>NUCLEOTIDE SEQUENCE [LARGE SCALE GENOMIC DNA]</scope>
    <source>
        <strain>ATCC 39315 / El Tor Inaba N16961</strain>
    </source>
</reference>